<evidence type="ECO:0000255" key="1">
    <source>
        <dbReference type="HAMAP-Rule" id="MF_00296"/>
    </source>
</evidence>
<organism>
    <name type="scientific">Pseudomonas syringae pv. tomato (strain ATCC BAA-871 / DC3000)</name>
    <dbReference type="NCBI Taxonomy" id="223283"/>
    <lineage>
        <taxon>Bacteria</taxon>
        <taxon>Pseudomonadati</taxon>
        <taxon>Pseudomonadota</taxon>
        <taxon>Gammaproteobacteria</taxon>
        <taxon>Pseudomonadales</taxon>
        <taxon>Pseudomonadaceae</taxon>
        <taxon>Pseudomonas</taxon>
    </lineage>
</organism>
<proteinExistence type="inferred from homology"/>
<protein>
    <recommendedName>
        <fullName evidence="1">Homoserine O-succinyltransferase</fullName>
        <shortName evidence="1">HST</shortName>
        <ecNumber evidence="1">2.3.1.46</ecNumber>
    </recommendedName>
    <alternativeName>
        <fullName evidence="1">Homoserine transsuccinylase</fullName>
        <shortName evidence="1">HTS</shortName>
    </alternativeName>
</protein>
<feature type="chain" id="PRO_0000155739" description="Homoserine O-succinyltransferase">
    <location>
        <begin position="1"/>
        <end position="379"/>
    </location>
</feature>
<feature type="domain" description="AB hydrolase-1" evidence="1">
    <location>
        <begin position="51"/>
        <end position="360"/>
    </location>
</feature>
<feature type="active site" description="Nucleophile" evidence="1">
    <location>
        <position position="157"/>
    </location>
</feature>
<feature type="active site" evidence="1">
    <location>
        <position position="323"/>
    </location>
</feature>
<feature type="active site" evidence="1">
    <location>
        <position position="356"/>
    </location>
</feature>
<feature type="binding site" evidence="1">
    <location>
        <position position="227"/>
    </location>
    <ligand>
        <name>substrate</name>
    </ligand>
</feature>
<feature type="binding site" evidence="1">
    <location>
        <position position="357"/>
    </location>
    <ligand>
        <name>substrate</name>
    </ligand>
</feature>
<feature type="site" description="Important for acyl-CoA specificity" evidence="1">
    <location>
        <position position="325"/>
    </location>
</feature>
<gene>
    <name evidence="1" type="primary">metXS</name>
    <name type="ordered locus">PSPTO_5049</name>
</gene>
<sequence length="379" mass="41749">MPTVFPHDSVGLVTPQTAHFSEPLALACGRSLPAYDLIYETYGQLNAARSNAVLICHALSGHHHAAGFHSADDRKPGWWDSCIGPGKPIDTDKFFVVSLNNLGGCNGSTGPSSIDPDTGKPFGANFPVVTVEDWVNSQARLADVLNIDTWAAVIGGSLGGMQALQWTISYPDRVRHCLAIASAPKLSAQNIAFNEVARQAILTDPEFHGGSFQERGVIPKRGLMLARMVGHITYLSDDSMGEKFGRGLKSEKLNYDFHSVEFQVESYLRYQGEEFSGRFDANTYLLMTKALDYFDPAANFNDDLAKTFANATARFCVMSFTTDWRFSPARSRELVDALMAARKDVCYLEIDAPQGHDAFLIPIPRYLQAFGNYMNRISL</sequence>
<accession>Q87V90</accession>
<keyword id="KW-0012">Acyltransferase</keyword>
<keyword id="KW-0028">Amino-acid biosynthesis</keyword>
<keyword id="KW-0963">Cytoplasm</keyword>
<keyword id="KW-0486">Methionine biosynthesis</keyword>
<keyword id="KW-1185">Reference proteome</keyword>
<keyword id="KW-0808">Transferase</keyword>
<dbReference type="EC" id="2.3.1.46" evidence="1"/>
<dbReference type="EMBL" id="AE016853">
    <property type="protein sequence ID" value="AAO58477.1"/>
    <property type="molecule type" value="Genomic_DNA"/>
</dbReference>
<dbReference type="RefSeq" id="NP_794782.1">
    <property type="nucleotide sequence ID" value="NC_004578.1"/>
</dbReference>
<dbReference type="SMR" id="Q87V90"/>
<dbReference type="STRING" id="223283.PSPTO_5049"/>
<dbReference type="ESTHER" id="psesm-METX">
    <property type="family name" value="Homoserine_transacetylase"/>
</dbReference>
<dbReference type="KEGG" id="pst:PSPTO_5049"/>
<dbReference type="PATRIC" id="fig|223283.9.peg.5169"/>
<dbReference type="eggNOG" id="COG2021">
    <property type="taxonomic scope" value="Bacteria"/>
</dbReference>
<dbReference type="HOGENOM" id="CLU_028760_1_2_6"/>
<dbReference type="OrthoDB" id="9800754at2"/>
<dbReference type="PhylomeDB" id="Q87V90"/>
<dbReference type="UniPathway" id="UPA00051">
    <property type="reaction ID" value="UER00075"/>
</dbReference>
<dbReference type="Proteomes" id="UP000002515">
    <property type="component" value="Chromosome"/>
</dbReference>
<dbReference type="GO" id="GO:0005737">
    <property type="term" value="C:cytoplasm"/>
    <property type="evidence" value="ECO:0007669"/>
    <property type="project" value="UniProtKB-SubCell"/>
</dbReference>
<dbReference type="GO" id="GO:0004414">
    <property type="term" value="F:homoserine O-acetyltransferase activity"/>
    <property type="evidence" value="ECO:0007669"/>
    <property type="project" value="TreeGrafter"/>
</dbReference>
<dbReference type="GO" id="GO:0008899">
    <property type="term" value="F:homoserine O-succinyltransferase activity"/>
    <property type="evidence" value="ECO:0007669"/>
    <property type="project" value="UniProtKB-UniRule"/>
</dbReference>
<dbReference type="GO" id="GO:0009092">
    <property type="term" value="P:homoserine metabolic process"/>
    <property type="evidence" value="ECO:0007669"/>
    <property type="project" value="TreeGrafter"/>
</dbReference>
<dbReference type="GO" id="GO:0009086">
    <property type="term" value="P:methionine biosynthetic process"/>
    <property type="evidence" value="ECO:0007669"/>
    <property type="project" value="UniProtKB-UniRule"/>
</dbReference>
<dbReference type="FunFam" id="1.10.1740.110:FF:000001">
    <property type="entry name" value="Homoserine O-acetyltransferase"/>
    <property type="match status" value="1"/>
</dbReference>
<dbReference type="Gene3D" id="1.10.1740.110">
    <property type="match status" value="1"/>
</dbReference>
<dbReference type="Gene3D" id="3.40.50.1820">
    <property type="entry name" value="alpha/beta hydrolase"/>
    <property type="match status" value="1"/>
</dbReference>
<dbReference type="HAMAP" id="MF_00296">
    <property type="entry name" value="MetX_acyltransf"/>
    <property type="match status" value="1"/>
</dbReference>
<dbReference type="InterPro" id="IPR000073">
    <property type="entry name" value="AB_hydrolase_1"/>
</dbReference>
<dbReference type="InterPro" id="IPR029058">
    <property type="entry name" value="AB_hydrolase_fold"/>
</dbReference>
<dbReference type="InterPro" id="IPR008220">
    <property type="entry name" value="HAT_MetX-like"/>
</dbReference>
<dbReference type="NCBIfam" id="TIGR01392">
    <property type="entry name" value="homoserO_Ac_trn"/>
    <property type="match status" value="1"/>
</dbReference>
<dbReference type="NCBIfam" id="NF001209">
    <property type="entry name" value="PRK00175.1"/>
    <property type="match status" value="1"/>
</dbReference>
<dbReference type="PANTHER" id="PTHR32268">
    <property type="entry name" value="HOMOSERINE O-ACETYLTRANSFERASE"/>
    <property type="match status" value="1"/>
</dbReference>
<dbReference type="PANTHER" id="PTHR32268:SF11">
    <property type="entry name" value="HOMOSERINE O-ACETYLTRANSFERASE"/>
    <property type="match status" value="1"/>
</dbReference>
<dbReference type="Pfam" id="PF00561">
    <property type="entry name" value="Abhydrolase_1"/>
    <property type="match status" value="1"/>
</dbReference>
<dbReference type="PIRSF" id="PIRSF000443">
    <property type="entry name" value="Homoser_Ac_trans"/>
    <property type="match status" value="1"/>
</dbReference>
<dbReference type="SUPFAM" id="SSF53474">
    <property type="entry name" value="alpha/beta-Hydrolases"/>
    <property type="match status" value="1"/>
</dbReference>
<reference key="1">
    <citation type="journal article" date="2003" name="Proc. Natl. Acad. Sci. U.S.A.">
        <title>The complete genome sequence of the Arabidopsis and tomato pathogen Pseudomonas syringae pv. tomato DC3000.</title>
        <authorList>
            <person name="Buell C.R."/>
            <person name="Joardar V."/>
            <person name="Lindeberg M."/>
            <person name="Selengut J."/>
            <person name="Paulsen I.T."/>
            <person name="Gwinn M.L."/>
            <person name="Dodson R.J."/>
            <person name="DeBoy R.T."/>
            <person name="Durkin A.S."/>
            <person name="Kolonay J.F."/>
            <person name="Madupu R."/>
            <person name="Daugherty S.C."/>
            <person name="Brinkac L.M."/>
            <person name="Beanan M.J."/>
            <person name="Haft D.H."/>
            <person name="Nelson W.C."/>
            <person name="Davidsen T.M."/>
            <person name="Zafar N."/>
            <person name="Zhou L."/>
            <person name="Liu J."/>
            <person name="Yuan Q."/>
            <person name="Khouri H.M."/>
            <person name="Fedorova N.B."/>
            <person name="Tran B."/>
            <person name="Russell D."/>
            <person name="Berry K.J."/>
            <person name="Utterback T.R."/>
            <person name="Van Aken S.E."/>
            <person name="Feldblyum T.V."/>
            <person name="D'Ascenzo M."/>
            <person name="Deng W.-L."/>
            <person name="Ramos A.R."/>
            <person name="Alfano J.R."/>
            <person name="Cartinhour S."/>
            <person name="Chatterjee A.K."/>
            <person name="Delaney T.P."/>
            <person name="Lazarowitz S.G."/>
            <person name="Martin G.B."/>
            <person name="Schneider D.J."/>
            <person name="Tang X."/>
            <person name="Bender C.L."/>
            <person name="White O."/>
            <person name="Fraser C.M."/>
            <person name="Collmer A."/>
        </authorList>
    </citation>
    <scope>NUCLEOTIDE SEQUENCE [LARGE SCALE GENOMIC DNA]</scope>
    <source>
        <strain>ATCC BAA-871 / DC3000</strain>
    </source>
</reference>
<comment type="function">
    <text evidence="1">Transfers a succinyl group from succinyl-CoA to L-homoserine, forming succinyl-L-homoserine.</text>
</comment>
<comment type="catalytic activity">
    <reaction evidence="1">
        <text>L-homoserine + succinyl-CoA = O-succinyl-L-homoserine + CoA</text>
        <dbReference type="Rhea" id="RHEA:22008"/>
        <dbReference type="ChEBI" id="CHEBI:57287"/>
        <dbReference type="ChEBI" id="CHEBI:57292"/>
        <dbReference type="ChEBI" id="CHEBI:57476"/>
        <dbReference type="ChEBI" id="CHEBI:57661"/>
        <dbReference type="EC" id="2.3.1.46"/>
    </reaction>
</comment>
<comment type="pathway">
    <text evidence="1">Amino-acid biosynthesis; L-methionine biosynthesis via de novo pathway; O-succinyl-L-homoserine from L-homoserine: step 1/1.</text>
</comment>
<comment type="subunit">
    <text evidence="1">Homodimer.</text>
</comment>
<comment type="subcellular location">
    <subcellularLocation>
        <location evidence="1">Cytoplasm</location>
    </subcellularLocation>
</comment>
<comment type="similarity">
    <text evidence="1">Belongs to the AB hydrolase superfamily. MetX family.</text>
</comment>
<name>METXS_PSESM</name>